<organism>
    <name type="scientific">Salmonella typhimurium (strain LT2 / SGSC1412 / ATCC 700720)</name>
    <dbReference type="NCBI Taxonomy" id="99287"/>
    <lineage>
        <taxon>Bacteria</taxon>
        <taxon>Pseudomonadati</taxon>
        <taxon>Pseudomonadota</taxon>
        <taxon>Gammaproteobacteria</taxon>
        <taxon>Enterobacterales</taxon>
        <taxon>Enterobacteriaceae</taxon>
        <taxon>Salmonella</taxon>
    </lineage>
</organism>
<evidence type="ECO:0000255" key="1">
    <source>
        <dbReference type="HAMAP-Rule" id="MF_00069"/>
    </source>
</evidence>
<feature type="chain" id="PRO_0000151681" description="Hydroxylamine reductase">
    <location>
        <begin position="1"/>
        <end position="550"/>
    </location>
</feature>
<feature type="binding site" evidence="1">
    <location>
        <position position="3"/>
    </location>
    <ligand>
        <name>[2Fe-2S] cluster</name>
        <dbReference type="ChEBI" id="CHEBI:190135"/>
    </ligand>
</feature>
<feature type="binding site" evidence="1">
    <location>
        <position position="6"/>
    </location>
    <ligand>
        <name>[2Fe-2S] cluster</name>
        <dbReference type="ChEBI" id="CHEBI:190135"/>
    </ligand>
</feature>
<feature type="binding site" evidence="1">
    <location>
        <position position="18"/>
    </location>
    <ligand>
        <name>[2Fe-2S] cluster</name>
        <dbReference type="ChEBI" id="CHEBI:190135"/>
    </ligand>
</feature>
<feature type="binding site" evidence="1">
    <location>
        <position position="25"/>
    </location>
    <ligand>
        <name>[2Fe-2S] cluster</name>
        <dbReference type="ChEBI" id="CHEBI:190135"/>
    </ligand>
</feature>
<feature type="binding site" evidence="1">
    <location>
        <position position="249"/>
    </location>
    <ligand>
        <name>hybrid [4Fe-2O-2S] cluster</name>
        <dbReference type="ChEBI" id="CHEBI:60519"/>
    </ligand>
</feature>
<feature type="binding site" evidence="1">
    <location>
        <position position="273"/>
    </location>
    <ligand>
        <name>hybrid [4Fe-2O-2S] cluster</name>
        <dbReference type="ChEBI" id="CHEBI:60519"/>
    </ligand>
</feature>
<feature type="binding site" evidence="1">
    <location>
        <position position="317"/>
    </location>
    <ligand>
        <name>hybrid [4Fe-2O-2S] cluster</name>
        <dbReference type="ChEBI" id="CHEBI:60519"/>
    </ligand>
</feature>
<feature type="binding site" description="via persulfide group" evidence="1">
    <location>
        <position position="405"/>
    </location>
    <ligand>
        <name>hybrid [4Fe-2O-2S] cluster</name>
        <dbReference type="ChEBI" id="CHEBI:60519"/>
    </ligand>
</feature>
<feature type="binding site" evidence="1">
    <location>
        <position position="433"/>
    </location>
    <ligand>
        <name>hybrid [4Fe-2O-2S] cluster</name>
        <dbReference type="ChEBI" id="CHEBI:60519"/>
    </ligand>
</feature>
<feature type="binding site" evidence="1">
    <location>
        <position position="458"/>
    </location>
    <ligand>
        <name>hybrid [4Fe-2O-2S] cluster</name>
        <dbReference type="ChEBI" id="CHEBI:60519"/>
    </ligand>
</feature>
<feature type="binding site" evidence="1">
    <location>
        <position position="492"/>
    </location>
    <ligand>
        <name>hybrid [4Fe-2O-2S] cluster</name>
        <dbReference type="ChEBI" id="CHEBI:60519"/>
    </ligand>
</feature>
<feature type="binding site" evidence="1">
    <location>
        <position position="494"/>
    </location>
    <ligand>
        <name>hybrid [4Fe-2O-2S] cluster</name>
        <dbReference type="ChEBI" id="CHEBI:60519"/>
    </ligand>
</feature>
<feature type="modified residue" description="Cysteine persulfide" evidence="1">
    <location>
        <position position="405"/>
    </location>
</feature>
<proteinExistence type="inferred from homology"/>
<sequence>MFCVQCEQTIRTPAGNGCSYAQGMCGKTAETSDLQDLLIAALQGLSAWAVKAREYGIINHDVDNFAPRAFFSTLTNVNFDSPRIVGYAREAIALREALKAQCLSVDANAHCDNPMADLQLVSDDLGDLQRQAAEFTPNKDKAAIGENILGLRLLCLYGLKGAAAYMEHAHVLGQYDNDIYAQYHKIMAWLGTWPADMNALLECAMEIGQMNFKVMSILDAGETTKYGHPTPTQVNVKATEGKCILISGHDLKDLYNLLEQTEGTGVNVYTHGEMLPAHGYPELRKFKHLVGNYGSGWQNQQVEFARFPGPIVMTSNCIIDPTVGSYDDRIWTRSIVGWPGVSHLEGDDFGPVIAQAQQMAGFPYSEIPHIITVGFGRQTLLGAADTLIDLVSREKLRHIFLVGGCDGARGERNYFTDFATSVPDDCLILTLACGKYRFNKLEFGDIEGLPRLVDAGQCNDAYSAIILAVTLAEKLGCGVNDLPLSLVLSWFEQKAIVILLTLLSLGVKNIVTGPTAPGFFTPDLLAILNEKFGLRSVTTVEEDMKQLLSA</sequence>
<dbReference type="EC" id="1.7.99.1" evidence="1"/>
<dbReference type="EMBL" id="AE006468">
    <property type="protein sequence ID" value="AAL19873.1"/>
    <property type="molecule type" value="Genomic_DNA"/>
</dbReference>
<dbReference type="RefSeq" id="NP_459914.1">
    <property type="nucleotide sequence ID" value="NC_003197.2"/>
</dbReference>
<dbReference type="RefSeq" id="WP_000458775.1">
    <property type="nucleotide sequence ID" value="NC_003197.2"/>
</dbReference>
<dbReference type="SMR" id="Q8ZQE8"/>
<dbReference type="STRING" id="99287.STM0937"/>
<dbReference type="PaxDb" id="99287-STM0937"/>
<dbReference type="GeneID" id="1252456"/>
<dbReference type="KEGG" id="stm:STM0937"/>
<dbReference type="PATRIC" id="fig|99287.12.peg.988"/>
<dbReference type="HOGENOM" id="CLU_038344_2_0_6"/>
<dbReference type="OMA" id="AYAQGMC"/>
<dbReference type="PhylomeDB" id="Q8ZQE8"/>
<dbReference type="BioCyc" id="SENT99287:STM0937-MONOMER"/>
<dbReference type="Proteomes" id="UP000001014">
    <property type="component" value="Chromosome"/>
</dbReference>
<dbReference type="GO" id="GO:0005737">
    <property type="term" value="C:cytoplasm"/>
    <property type="evidence" value="ECO:0007669"/>
    <property type="project" value="UniProtKB-SubCell"/>
</dbReference>
<dbReference type="GO" id="GO:0051537">
    <property type="term" value="F:2 iron, 2 sulfur cluster binding"/>
    <property type="evidence" value="ECO:0007669"/>
    <property type="project" value="UniProtKB-KW"/>
</dbReference>
<dbReference type="GO" id="GO:0050418">
    <property type="term" value="F:hydroxylamine reductase activity"/>
    <property type="evidence" value="ECO:0000318"/>
    <property type="project" value="GO_Central"/>
</dbReference>
<dbReference type="GO" id="GO:0046872">
    <property type="term" value="F:metal ion binding"/>
    <property type="evidence" value="ECO:0007669"/>
    <property type="project" value="UniProtKB-KW"/>
</dbReference>
<dbReference type="GO" id="GO:0004601">
    <property type="term" value="F:peroxidase activity"/>
    <property type="evidence" value="ECO:0000318"/>
    <property type="project" value="GO_Central"/>
</dbReference>
<dbReference type="GO" id="GO:0046210">
    <property type="term" value="P:nitric oxide catabolic process"/>
    <property type="evidence" value="ECO:0000318"/>
    <property type="project" value="GO_Central"/>
</dbReference>
<dbReference type="GO" id="GO:0042542">
    <property type="term" value="P:response to hydrogen peroxide"/>
    <property type="evidence" value="ECO:0000318"/>
    <property type="project" value="GO_Central"/>
</dbReference>
<dbReference type="CDD" id="cd01914">
    <property type="entry name" value="HCP"/>
    <property type="match status" value="1"/>
</dbReference>
<dbReference type="FunFam" id="1.20.1270.20:FF:000001">
    <property type="entry name" value="Hydroxylamine reductase"/>
    <property type="match status" value="1"/>
</dbReference>
<dbReference type="FunFam" id="1.20.1270.20:FF:000002">
    <property type="entry name" value="Hydroxylamine reductase"/>
    <property type="match status" value="1"/>
</dbReference>
<dbReference type="FunFam" id="3.40.50.2030:FF:000001">
    <property type="entry name" value="Hydroxylamine reductase"/>
    <property type="match status" value="1"/>
</dbReference>
<dbReference type="FunFam" id="3.40.50.2030:FF:000002">
    <property type="entry name" value="Hydroxylamine reductase"/>
    <property type="match status" value="1"/>
</dbReference>
<dbReference type="Gene3D" id="1.20.1270.20">
    <property type="match status" value="2"/>
</dbReference>
<dbReference type="Gene3D" id="3.40.50.2030">
    <property type="match status" value="2"/>
</dbReference>
<dbReference type="HAMAP" id="MF_00069">
    <property type="entry name" value="Hydroxylam_reduct"/>
    <property type="match status" value="1"/>
</dbReference>
<dbReference type="InterPro" id="IPR004137">
    <property type="entry name" value="HCP/CODH"/>
</dbReference>
<dbReference type="InterPro" id="IPR010048">
    <property type="entry name" value="Hydroxylam_reduct"/>
</dbReference>
<dbReference type="InterPro" id="IPR016099">
    <property type="entry name" value="Prismane-like_a/b-sand"/>
</dbReference>
<dbReference type="InterPro" id="IPR011254">
    <property type="entry name" value="Prismane-like_sf"/>
</dbReference>
<dbReference type="InterPro" id="IPR016100">
    <property type="entry name" value="Prismane_a-bundle"/>
</dbReference>
<dbReference type="NCBIfam" id="TIGR01703">
    <property type="entry name" value="hybrid_clust"/>
    <property type="match status" value="1"/>
</dbReference>
<dbReference type="NCBIfam" id="NF003658">
    <property type="entry name" value="PRK05290.1"/>
    <property type="match status" value="1"/>
</dbReference>
<dbReference type="PANTHER" id="PTHR30109">
    <property type="entry name" value="HYDROXYLAMINE REDUCTASE"/>
    <property type="match status" value="1"/>
</dbReference>
<dbReference type="PANTHER" id="PTHR30109:SF0">
    <property type="entry name" value="HYDROXYLAMINE REDUCTASE"/>
    <property type="match status" value="1"/>
</dbReference>
<dbReference type="Pfam" id="PF03063">
    <property type="entry name" value="Prismane"/>
    <property type="match status" value="1"/>
</dbReference>
<dbReference type="PIRSF" id="PIRSF000076">
    <property type="entry name" value="HCP"/>
    <property type="match status" value="1"/>
</dbReference>
<dbReference type="SUPFAM" id="SSF56821">
    <property type="entry name" value="Prismane protein-like"/>
    <property type="match status" value="1"/>
</dbReference>
<name>HCP_SALTY</name>
<protein>
    <recommendedName>
        <fullName evidence="1">Hydroxylamine reductase</fullName>
        <ecNumber evidence="1">1.7.99.1</ecNumber>
    </recommendedName>
    <alternativeName>
        <fullName evidence="1">Hybrid-cluster protein</fullName>
        <shortName evidence="1">HCP</shortName>
    </alternativeName>
    <alternativeName>
        <fullName evidence="1">Prismane protein</fullName>
    </alternativeName>
</protein>
<reference key="1">
    <citation type="journal article" date="2001" name="Nature">
        <title>Complete genome sequence of Salmonella enterica serovar Typhimurium LT2.</title>
        <authorList>
            <person name="McClelland M."/>
            <person name="Sanderson K.E."/>
            <person name="Spieth J."/>
            <person name="Clifton S.W."/>
            <person name="Latreille P."/>
            <person name="Courtney L."/>
            <person name="Porwollik S."/>
            <person name="Ali J."/>
            <person name="Dante M."/>
            <person name="Du F."/>
            <person name="Hou S."/>
            <person name="Layman D."/>
            <person name="Leonard S."/>
            <person name="Nguyen C."/>
            <person name="Scott K."/>
            <person name="Holmes A."/>
            <person name="Grewal N."/>
            <person name="Mulvaney E."/>
            <person name="Ryan E."/>
            <person name="Sun H."/>
            <person name="Florea L."/>
            <person name="Miller W."/>
            <person name="Stoneking T."/>
            <person name="Nhan M."/>
            <person name="Waterston R."/>
            <person name="Wilson R.K."/>
        </authorList>
    </citation>
    <scope>NUCLEOTIDE SEQUENCE [LARGE SCALE GENOMIC DNA]</scope>
    <source>
        <strain>LT2 / SGSC1412 / ATCC 700720</strain>
    </source>
</reference>
<keyword id="KW-0001">2Fe-2S</keyword>
<keyword id="KW-0963">Cytoplasm</keyword>
<keyword id="KW-0408">Iron</keyword>
<keyword id="KW-0411">Iron-sulfur</keyword>
<keyword id="KW-0479">Metal-binding</keyword>
<keyword id="KW-0560">Oxidoreductase</keyword>
<keyword id="KW-1185">Reference proteome</keyword>
<comment type="function">
    <text evidence="1">Catalyzes the reduction of hydroxylamine to form NH(3) and H(2)O.</text>
</comment>
<comment type="catalytic activity">
    <reaction evidence="1">
        <text>A + NH4(+) + H2O = hydroxylamine + AH2 + H(+)</text>
        <dbReference type="Rhea" id="RHEA:22052"/>
        <dbReference type="ChEBI" id="CHEBI:13193"/>
        <dbReference type="ChEBI" id="CHEBI:15377"/>
        <dbReference type="ChEBI" id="CHEBI:15378"/>
        <dbReference type="ChEBI" id="CHEBI:15429"/>
        <dbReference type="ChEBI" id="CHEBI:17499"/>
        <dbReference type="ChEBI" id="CHEBI:28938"/>
        <dbReference type="EC" id="1.7.99.1"/>
    </reaction>
</comment>
<comment type="cofactor">
    <cofactor evidence="1">
        <name>[2Fe-2S] cluster</name>
        <dbReference type="ChEBI" id="CHEBI:190135"/>
    </cofactor>
    <text evidence="1">Binds 1 [2Fe-2S] cluster.</text>
</comment>
<comment type="cofactor">
    <cofactor evidence="1">
        <name>hybrid [4Fe-2O-2S] cluster</name>
        <dbReference type="ChEBI" id="CHEBI:60519"/>
    </cofactor>
    <text evidence="1">Binds 1 hybrid [4Fe-2O-2S] cluster.</text>
</comment>
<comment type="subcellular location">
    <subcellularLocation>
        <location evidence="1">Cytoplasm</location>
    </subcellularLocation>
</comment>
<comment type="similarity">
    <text evidence="1">Belongs to the HCP family.</text>
</comment>
<accession>Q8ZQE8</accession>
<gene>
    <name evidence="1" type="primary">hcp</name>
    <name type="ordered locus">STM0937</name>
</gene>